<organism>
    <name type="scientific">Xanthomonas oryzae pv. oryzae (strain PXO99A)</name>
    <dbReference type="NCBI Taxonomy" id="360094"/>
    <lineage>
        <taxon>Bacteria</taxon>
        <taxon>Pseudomonadati</taxon>
        <taxon>Pseudomonadota</taxon>
        <taxon>Gammaproteobacteria</taxon>
        <taxon>Lysobacterales</taxon>
        <taxon>Lysobacteraceae</taxon>
        <taxon>Xanthomonas</taxon>
    </lineage>
</organism>
<name>HIS4_XANOP</name>
<protein>
    <recommendedName>
        <fullName evidence="1">1-(5-phosphoribosyl)-5-[(5-phosphoribosylamino)methylideneamino] imidazole-4-carboxamide isomerase</fullName>
        <ecNumber evidence="1">5.3.1.16</ecNumber>
    </recommendedName>
    <alternativeName>
        <fullName evidence="1">Phosphoribosylformimino-5-aminoimidazole carboxamide ribotide isomerase</fullName>
    </alternativeName>
</protein>
<evidence type="ECO:0000255" key="1">
    <source>
        <dbReference type="HAMAP-Rule" id="MF_01014"/>
    </source>
</evidence>
<feature type="chain" id="PRO_1000190571" description="1-(5-phosphoribosyl)-5-[(5-phosphoribosylamino)methylideneamino] imidazole-4-carboxamide isomerase">
    <location>
        <begin position="1"/>
        <end position="244"/>
    </location>
</feature>
<feature type="active site" description="Proton acceptor" evidence="1">
    <location>
        <position position="10"/>
    </location>
</feature>
<feature type="active site" description="Proton donor" evidence="1">
    <location>
        <position position="132"/>
    </location>
</feature>
<gene>
    <name evidence="1" type="primary">hisA</name>
    <name type="ordered locus">PXO_00837</name>
</gene>
<proteinExistence type="inferred from homology"/>
<sequence length="244" mass="25758">MSFTVYPALDIRNGRVVRLLQGDYARETHYGNDVLPRAQAFADAGAQWMHLVDLDAAKAGGYTLATTLGEIARATGLQVQTGGGVRSRDDVASILDAGAARVVIGSLAVRDSEMVIAWLQEFGADRLTIALDTRQDTDGIWQLPVHGWTETADATLDQLAVRYAQAGLKHLLCTDIARDGMLSGPNAALYAHLRSLTPQLQVQVSGGARNLADVAAAKAAGCAGIVLGKALLEGHLDLDEALAC</sequence>
<reference key="1">
    <citation type="journal article" date="2008" name="BMC Genomics">
        <title>Genome sequence and rapid evolution of the rice pathogen Xanthomonas oryzae pv. oryzae PXO99A.</title>
        <authorList>
            <person name="Salzberg S.L."/>
            <person name="Sommer D.D."/>
            <person name="Schatz M.C."/>
            <person name="Phillippy A.M."/>
            <person name="Rabinowicz P.D."/>
            <person name="Tsuge S."/>
            <person name="Furutani A."/>
            <person name="Ochiai H."/>
            <person name="Delcher A.L."/>
            <person name="Kelley D."/>
            <person name="Madupu R."/>
            <person name="Puiu D."/>
            <person name="Radune D."/>
            <person name="Shumway M."/>
            <person name="Trapnell C."/>
            <person name="Aparna G."/>
            <person name="Jha G."/>
            <person name="Pandey A."/>
            <person name="Patil P.B."/>
            <person name="Ishihara H."/>
            <person name="Meyer D.F."/>
            <person name="Szurek B."/>
            <person name="Verdier V."/>
            <person name="Koebnik R."/>
            <person name="Dow J.M."/>
            <person name="Ryan R.P."/>
            <person name="Hirata H."/>
            <person name="Tsuyumu S."/>
            <person name="Won Lee S."/>
            <person name="Seo Y.-S."/>
            <person name="Sriariyanum M."/>
            <person name="Ronald P.C."/>
            <person name="Sonti R.V."/>
            <person name="Van Sluys M.-A."/>
            <person name="Leach J.E."/>
            <person name="White F.F."/>
            <person name="Bogdanove A.J."/>
        </authorList>
    </citation>
    <scope>NUCLEOTIDE SEQUENCE [LARGE SCALE GENOMIC DNA]</scope>
    <source>
        <strain>PXO99A</strain>
    </source>
</reference>
<dbReference type="EC" id="5.3.1.16" evidence="1"/>
<dbReference type="EMBL" id="CP000967">
    <property type="protein sequence ID" value="ACD58956.1"/>
    <property type="molecule type" value="Genomic_DNA"/>
</dbReference>
<dbReference type="RefSeq" id="WP_011258946.1">
    <property type="nucleotide sequence ID" value="NC_010717.2"/>
</dbReference>
<dbReference type="SMR" id="B2SKN4"/>
<dbReference type="KEGG" id="xop:PXO_00837"/>
<dbReference type="eggNOG" id="COG0106">
    <property type="taxonomic scope" value="Bacteria"/>
</dbReference>
<dbReference type="HOGENOM" id="CLU_048577_1_2_6"/>
<dbReference type="UniPathway" id="UPA00031">
    <property type="reaction ID" value="UER00009"/>
</dbReference>
<dbReference type="Proteomes" id="UP000001740">
    <property type="component" value="Chromosome"/>
</dbReference>
<dbReference type="GO" id="GO:0005737">
    <property type="term" value="C:cytoplasm"/>
    <property type="evidence" value="ECO:0007669"/>
    <property type="project" value="UniProtKB-SubCell"/>
</dbReference>
<dbReference type="GO" id="GO:0003949">
    <property type="term" value="F:1-(5-phosphoribosyl)-5-[(5-phosphoribosylamino)methylideneamino]imidazole-4-carboxamide isomerase activity"/>
    <property type="evidence" value="ECO:0007669"/>
    <property type="project" value="UniProtKB-UniRule"/>
</dbReference>
<dbReference type="GO" id="GO:0000105">
    <property type="term" value="P:L-histidine biosynthetic process"/>
    <property type="evidence" value="ECO:0007669"/>
    <property type="project" value="UniProtKB-UniRule"/>
</dbReference>
<dbReference type="GO" id="GO:0000162">
    <property type="term" value="P:L-tryptophan biosynthetic process"/>
    <property type="evidence" value="ECO:0007669"/>
    <property type="project" value="TreeGrafter"/>
</dbReference>
<dbReference type="CDD" id="cd04732">
    <property type="entry name" value="HisA"/>
    <property type="match status" value="1"/>
</dbReference>
<dbReference type="FunFam" id="3.20.20.70:FF:000009">
    <property type="entry name" value="1-(5-phosphoribosyl)-5-[(5-phosphoribosylamino)methylideneamino] imidazole-4-carboxamide isomerase"/>
    <property type="match status" value="1"/>
</dbReference>
<dbReference type="Gene3D" id="3.20.20.70">
    <property type="entry name" value="Aldolase class I"/>
    <property type="match status" value="1"/>
</dbReference>
<dbReference type="HAMAP" id="MF_01014">
    <property type="entry name" value="HisA"/>
    <property type="match status" value="1"/>
</dbReference>
<dbReference type="InterPro" id="IPR013785">
    <property type="entry name" value="Aldolase_TIM"/>
</dbReference>
<dbReference type="InterPro" id="IPR006062">
    <property type="entry name" value="His_biosynth"/>
</dbReference>
<dbReference type="InterPro" id="IPR006063">
    <property type="entry name" value="HisA_bact_arch"/>
</dbReference>
<dbReference type="InterPro" id="IPR044524">
    <property type="entry name" value="Isoase_HisA-like"/>
</dbReference>
<dbReference type="InterPro" id="IPR023016">
    <property type="entry name" value="Isoase_HisA-like_bact"/>
</dbReference>
<dbReference type="InterPro" id="IPR011060">
    <property type="entry name" value="RibuloseP-bd_barrel"/>
</dbReference>
<dbReference type="NCBIfam" id="TIGR00007">
    <property type="entry name" value="1-(5-phosphoribosyl)-5-[(5-phosphoribosylamino)methylideneamino]imidazole-4-carboxamide isomerase"/>
    <property type="match status" value="1"/>
</dbReference>
<dbReference type="PANTHER" id="PTHR43090">
    <property type="entry name" value="1-(5-PHOSPHORIBOSYL)-5-[(5-PHOSPHORIBOSYLAMINO)METHYLIDENEAMINO] IMIDAZOLE-4-CARBOXAMIDE ISOMERASE"/>
    <property type="match status" value="1"/>
</dbReference>
<dbReference type="PANTHER" id="PTHR43090:SF2">
    <property type="entry name" value="1-(5-PHOSPHORIBOSYL)-5-[(5-PHOSPHORIBOSYLAMINO)METHYLIDENEAMINO] IMIDAZOLE-4-CARBOXAMIDE ISOMERASE"/>
    <property type="match status" value="1"/>
</dbReference>
<dbReference type="Pfam" id="PF00977">
    <property type="entry name" value="His_biosynth"/>
    <property type="match status" value="1"/>
</dbReference>
<dbReference type="SUPFAM" id="SSF51366">
    <property type="entry name" value="Ribulose-phoshate binding barrel"/>
    <property type="match status" value="1"/>
</dbReference>
<keyword id="KW-0028">Amino-acid biosynthesis</keyword>
<keyword id="KW-0963">Cytoplasm</keyword>
<keyword id="KW-0368">Histidine biosynthesis</keyword>
<keyword id="KW-0413">Isomerase</keyword>
<comment type="catalytic activity">
    <reaction evidence="1">
        <text>1-(5-phospho-beta-D-ribosyl)-5-[(5-phospho-beta-D-ribosylamino)methylideneamino]imidazole-4-carboxamide = 5-[(5-phospho-1-deoxy-D-ribulos-1-ylimino)methylamino]-1-(5-phospho-beta-D-ribosyl)imidazole-4-carboxamide</text>
        <dbReference type="Rhea" id="RHEA:15469"/>
        <dbReference type="ChEBI" id="CHEBI:58435"/>
        <dbReference type="ChEBI" id="CHEBI:58525"/>
        <dbReference type="EC" id="5.3.1.16"/>
    </reaction>
</comment>
<comment type="pathway">
    <text evidence="1">Amino-acid biosynthesis; L-histidine biosynthesis; L-histidine from 5-phospho-alpha-D-ribose 1-diphosphate: step 4/9.</text>
</comment>
<comment type="subcellular location">
    <subcellularLocation>
        <location evidence="1">Cytoplasm</location>
    </subcellularLocation>
</comment>
<comment type="similarity">
    <text evidence="1">Belongs to the HisA/HisF family.</text>
</comment>
<accession>B2SKN4</accession>